<sequence>MAKEKFARTKPHVNIGTIGHVDHGKTTLTAAITKVMAAAGRAEFRAYDQIDGAPEERERGITISTAHVEYETEARHYAHVDCPGHADYVKNMITGAAQMDGGILVVSAADGPMPQTREHILLARQVGVPALVVFLNKVDQVDDEELLELVEMEVRELLSSYDFPGDDIPVIKGSALKALEGEESEMGVDAINRLMDAVDAYIPEPERPLDQAFLMPIEDVFTISGRGTVVTGRIERGIVKVGEQVAIIGIKDTVVTTCTGVEMFRKLLDQGQAGDNVGVLLRGTKREDVQRGQVLAAPNSIKPHTKFNAESYILTKEEGGRHTPFFSNYRPQFYFRTTDVTGVLKLPEGVEMVMPGDNITMEVELIAPIAMEKGLRFAIREGGRTVGAGVVAEVID</sequence>
<feature type="chain" id="PRO_0000337426" description="Elongation factor Tu">
    <location>
        <begin position="1"/>
        <end position="396"/>
    </location>
</feature>
<feature type="domain" description="tr-type G">
    <location>
        <begin position="10"/>
        <end position="206"/>
    </location>
</feature>
<feature type="region of interest" description="G1" evidence="1">
    <location>
        <begin position="19"/>
        <end position="26"/>
    </location>
</feature>
<feature type="region of interest" description="G2" evidence="1">
    <location>
        <begin position="60"/>
        <end position="64"/>
    </location>
</feature>
<feature type="region of interest" description="G3" evidence="1">
    <location>
        <begin position="81"/>
        <end position="84"/>
    </location>
</feature>
<feature type="region of interest" description="G4" evidence="1">
    <location>
        <begin position="136"/>
        <end position="139"/>
    </location>
</feature>
<feature type="region of interest" description="G5" evidence="1">
    <location>
        <begin position="174"/>
        <end position="176"/>
    </location>
</feature>
<feature type="binding site" evidence="2">
    <location>
        <begin position="19"/>
        <end position="26"/>
    </location>
    <ligand>
        <name>GTP</name>
        <dbReference type="ChEBI" id="CHEBI:37565"/>
    </ligand>
</feature>
<feature type="binding site" evidence="2">
    <location>
        <position position="26"/>
    </location>
    <ligand>
        <name>Mg(2+)</name>
        <dbReference type="ChEBI" id="CHEBI:18420"/>
    </ligand>
</feature>
<feature type="binding site" evidence="2">
    <location>
        <begin position="81"/>
        <end position="85"/>
    </location>
    <ligand>
        <name>GTP</name>
        <dbReference type="ChEBI" id="CHEBI:37565"/>
    </ligand>
</feature>
<feature type="binding site" evidence="2">
    <location>
        <begin position="136"/>
        <end position="139"/>
    </location>
    <ligand>
        <name>GTP</name>
        <dbReference type="ChEBI" id="CHEBI:37565"/>
    </ligand>
</feature>
<evidence type="ECO:0000250" key="1"/>
<evidence type="ECO:0000255" key="2">
    <source>
        <dbReference type="HAMAP-Rule" id="MF_00118"/>
    </source>
</evidence>
<protein>
    <recommendedName>
        <fullName evidence="2">Elongation factor Tu</fullName>
        <shortName evidence="2">EF-Tu</shortName>
        <ecNumber evidence="2">3.6.5.3</ecNumber>
    </recommendedName>
</protein>
<accession>A0L5V8</accession>
<gene>
    <name evidence="2" type="primary">tuf1</name>
    <name type="ordered locus">Mmc1_0832</name>
</gene>
<gene>
    <name evidence="2" type="primary">tuf2</name>
    <name type="ordered locus">Mmc1_0845</name>
</gene>
<name>EFTU_MAGMM</name>
<keyword id="KW-0963">Cytoplasm</keyword>
<keyword id="KW-0251">Elongation factor</keyword>
<keyword id="KW-0342">GTP-binding</keyword>
<keyword id="KW-0378">Hydrolase</keyword>
<keyword id="KW-0460">Magnesium</keyword>
<keyword id="KW-0479">Metal-binding</keyword>
<keyword id="KW-0547">Nucleotide-binding</keyword>
<keyword id="KW-0648">Protein biosynthesis</keyword>
<keyword id="KW-1185">Reference proteome</keyword>
<proteinExistence type="inferred from homology"/>
<comment type="function">
    <text evidence="2">GTP hydrolase that promotes the GTP-dependent binding of aminoacyl-tRNA to the A-site of ribosomes during protein biosynthesis.</text>
</comment>
<comment type="catalytic activity">
    <reaction evidence="2">
        <text>GTP + H2O = GDP + phosphate + H(+)</text>
        <dbReference type="Rhea" id="RHEA:19669"/>
        <dbReference type="ChEBI" id="CHEBI:15377"/>
        <dbReference type="ChEBI" id="CHEBI:15378"/>
        <dbReference type="ChEBI" id="CHEBI:37565"/>
        <dbReference type="ChEBI" id="CHEBI:43474"/>
        <dbReference type="ChEBI" id="CHEBI:58189"/>
        <dbReference type="EC" id="3.6.5.3"/>
    </reaction>
    <physiologicalReaction direction="left-to-right" evidence="2">
        <dbReference type="Rhea" id="RHEA:19670"/>
    </physiologicalReaction>
</comment>
<comment type="subunit">
    <text evidence="2">Monomer.</text>
</comment>
<comment type="subcellular location">
    <subcellularLocation>
        <location evidence="2">Cytoplasm</location>
    </subcellularLocation>
</comment>
<comment type="similarity">
    <text evidence="2">Belongs to the TRAFAC class translation factor GTPase superfamily. Classic translation factor GTPase family. EF-Tu/EF-1A subfamily.</text>
</comment>
<reference key="1">
    <citation type="journal article" date="2009" name="Appl. Environ. Microbiol.">
        <title>Complete genome sequence of the chemolithoautotrophic marine magnetotactic coccus strain MC-1.</title>
        <authorList>
            <person name="Schubbe S."/>
            <person name="Williams T.J."/>
            <person name="Xie G."/>
            <person name="Kiss H.E."/>
            <person name="Brettin T.S."/>
            <person name="Martinez D."/>
            <person name="Ross C.A."/>
            <person name="Schuler D."/>
            <person name="Cox B.L."/>
            <person name="Nealson K.H."/>
            <person name="Bazylinski D.A."/>
        </authorList>
    </citation>
    <scope>NUCLEOTIDE SEQUENCE [LARGE SCALE GENOMIC DNA]</scope>
    <source>
        <strain>ATCC BAA-1437 / JCM 17883 / MC-1</strain>
    </source>
</reference>
<dbReference type="EC" id="3.6.5.3" evidence="2"/>
<dbReference type="EMBL" id="CP000471">
    <property type="protein sequence ID" value="ABK43351.1"/>
    <property type="molecule type" value="Genomic_DNA"/>
</dbReference>
<dbReference type="EMBL" id="CP000471">
    <property type="protein sequence ID" value="ABK43364.1"/>
    <property type="molecule type" value="Genomic_DNA"/>
</dbReference>
<dbReference type="RefSeq" id="WP_011712511.1">
    <property type="nucleotide sequence ID" value="NC_008576.1"/>
</dbReference>
<dbReference type="SMR" id="A0L5V8"/>
<dbReference type="STRING" id="156889.Mmc1_0832"/>
<dbReference type="KEGG" id="mgm:Mmc1_0832"/>
<dbReference type="KEGG" id="mgm:Mmc1_0845"/>
<dbReference type="eggNOG" id="COG0050">
    <property type="taxonomic scope" value="Bacteria"/>
</dbReference>
<dbReference type="HOGENOM" id="CLU_007265_0_0_5"/>
<dbReference type="OrthoDB" id="9803139at2"/>
<dbReference type="Proteomes" id="UP000002586">
    <property type="component" value="Chromosome"/>
</dbReference>
<dbReference type="GO" id="GO:0005829">
    <property type="term" value="C:cytosol"/>
    <property type="evidence" value="ECO:0007669"/>
    <property type="project" value="TreeGrafter"/>
</dbReference>
<dbReference type="GO" id="GO:0005525">
    <property type="term" value="F:GTP binding"/>
    <property type="evidence" value="ECO:0007669"/>
    <property type="project" value="UniProtKB-UniRule"/>
</dbReference>
<dbReference type="GO" id="GO:0003924">
    <property type="term" value="F:GTPase activity"/>
    <property type="evidence" value="ECO:0007669"/>
    <property type="project" value="InterPro"/>
</dbReference>
<dbReference type="GO" id="GO:0097216">
    <property type="term" value="F:guanosine tetraphosphate binding"/>
    <property type="evidence" value="ECO:0007669"/>
    <property type="project" value="UniProtKB-ARBA"/>
</dbReference>
<dbReference type="GO" id="GO:0003746">
    <property type="term" value="F:translation elongation factor activity"/>
    <property type="evidence" value="ECO:0007669"/>
    <property type="project" value="UniProtKB-UniRule"/>
</dbReference>
<dbReference type="CDD" id="cd01884">
    <property type="entry name" value="EF_Tu"/>
    <property type="match status" value="1"/>
</dbReference>
<dbReference type="CDD" id="cd03697">
    <property type="entry name" value="EFTU_II"/>
    <property type="match status" value="1"/>
</dbReference>
<dbReference type="CDD" id="cd03707">
    <property type="entry name" value="EFTU_III"/>
    <property type="match status" value="1"/>
</dbReference>
<dbReference type="FunFam" id="2.40.30.10:FF:000001">
    <property type="entry name" value="Elongation factor Tu"/>
    <property type="match status" value="1"/>
</dbReference>
<dbReference type="FunFam" id="3.40.50.300:FF:000003">
    <property type="entry name" value="Elongation factor Tu"/>
    <property type="match status" value="1"/>
</dbReference>
<dbReference type="Gene3D" id="3.40.50.300">
    <property type="entry name" value="P-loop containing nucleotide triphosphate hydrolases"/>
    <property type="match status" value="1"/>
</dbReference>
<dbReference type="Gene3D" id="2.40.30.10">
    <property type="entry name" value="Translation factors"/>
    <property type="match status" value="2"/>
</dbReference>
<dbReference type="HAMAP" id="MF_00118_B">
    <property type="entry name" value="EF_Tu_B"/>
    <property type="match status" value="1"/>
</dbReference>
<dbReference type="InterPro" id="IPR041709">
    <property type="entry name" value="EF-Tu_GTP-bd"/>
</dbReference>
<dbReference type="InterPro" id="IPR050055">
    <property type="entry name" value="EF-Tu_GTPase"/>
</dbReference>
<dbReference type="InterPro" id="IPR004161">
    <property type="entry name" value="EFTu-like_2"/>
</dbReference>
<dbReference type="InterPro" id="IPR033720">
    <property type="entry name" value="EFTU_2"/>
</dbReference>
<dbReference type="InterPro" id="IPR031157">
    <property type="entry name" value="G_TR_CS"/>
</dbReference>
<dbReference type="InterPro" id="IPR027417">
    <property type="entry name" value="P-loop_NTPase"/>
</dbReference>
<dbReference type="InterPro" id="IPR005225">
    <property type="entry name" value="Small_GTP-bd"/>
</dbReference>
<dbReference type="InterPro" id="IPR000795">
    <property type="entry name" value="T_Tr_GTP-bd_dom"/>
</dbReference>
<dbReference type="InterPro" id="IPR009000">
    <property type="entry name" value="Transl_B-barrel_sf"/>
</dbReference>
<dbReference type="InterPro" id="IPR009001">
    <property type="entry name" value="Transl_elong_EF1A/Init_IF2_C"/>
</dbReference>
<dbReference type="InterPro" id="IPR004541">
    <property type="entry name" value="Transl_elong_EFTu/EF1A_bac/org"/>
</dbReference>
<dbReference type="InterPro" id="IPR004160">
    <property type="entry name" value="Transl_elong_EFTu/EF1A_C"/>
</dbReference>
<dbReference type="NCBIfam" id="TIGR00485">
    <property type="entry name" value="EF-Tu"/>
    <property type="match status" value="1"/>
</dbReference>
<dbReference type="NCBIfam" id="NF000766">
    <property type="entry name" value="PRK00049.1"/>
    <property type="match status" value="1"/>
</dbReference>
<dbReference type="NCBIfam" id="NF009372">
    <property type="entry name" value="PRK12735.1"/>
    <property type="match status" value="1"/>
</dbReference>
<dbReference type="NCBIfam" id="NF009373">
    <property type="entry name" value="PRK12736.1"/>
    <property type="match status" value="1"/>
</dbReference>
<dbReference type="NCBIfam" id="TIGR00231">
    <property type="entry name" value="small_GTP"/>
    <property type="match status" value="1"/>
</dbReference>
<dbReference type="PANTHER" id="PTHR43721:SF22">
    <property type="entry name" value="ELONGATION FACTOR TU, MITOCHONDRIAL"/>
    <property type="match status" value="1"/>
</dbReference>
<dbReference type="PANTHER" id="PTHR43721">
    <property type="entry name" value="ELONGATION FACTOR TU-RELATED"/>
    <property type="match status" value="1"/>
</dbReference>
<dbReference type="Pfam" id="PF00009">
    <property type="entry name" value="GTP_EFTU"/>
    <property type="match status" value="1"/>
</dbReference>
<dbReference type="Pfam" id="PF03144">
    <property type="entry name" value="GTP_EFTU_D2"/>
    <property type="match status" value="1"/>
</dbReference>
<dbReference type="Pfam" id="PF03143">
    <property type="entry name" value="GTP_EFTU_D3"/>
    <property type="match status" value="1"/>
</dbReference>
<dbReference type="PRINTS" id="PR00315">
    <property type="entry name" value="ELONGATNFCT"/>
</dbReference>
<dbReference type="SUPFAM" id="SSF50465">
    <property type="entry name" value="EF-Tu/eEF-1alpha/eIF2-gamma C-terminal domain"/>
    <property type="match status" value="1"/>
</dbReference>
<dbReference type="SUPFAM" id="SSF52540">
    <property type="entry name" value="P-loop containing nucleoside triphosphate hydrolases"/>
    <property type="match status" value="1"/>
</dbReference>
<dbReference type="SUPFAM" id="SSF50447">
    <property type="entry name" value="Translation proteins"/>
    <property type="match status" value="1"/>
</dbReference>
<dbReference type="PROSITE" id="PS00301">
    <property type="entry name" value="G_TR_1"/>
    <property type="match status" value="1"/>
</dbReference>
<dbReference type="PROSITE" id="PS51722">
    <property type="entry name" value="G_TR_2"/>
    <property type="match status" value="1"/>
</dbReference>
<organism>
    <name type="scientific">Magnetococcus marinus (strain ATCC BAA-1437 / JCM 17883 / MC-1)</name>
    <dbReference type="NCBI Taxonomy" id="156889"/>
    <lineage>
        <taxon>Bacteria</taxon>
        <taxon>Pseudomonadati</taxon>
        <taxon>Pseudomonadota</taxon>
        <taxon>Alphaproteobacteria</taxon>
        <taxon>Magnetococcales</taxon>
        <taxon>Magnetococcaceae</taxon>
        <taxon>Magnetococcus</taxon>
    </lineage>
</organism>